<reference key="1">
    <citation type="journal article" date="2004" name="J. Mol. Microbiol. Biotechnol.">
        <title>The complete genome sequence of Bacillus licheniformis DSM13, an organism with great industrial potential.</title>
        <authorList>
            <person name="Veith B."/>
            <person name="Herzberg C."/>
            <person name="Steckel S."/>
            <person name="Feesche J."/>
            <person name="Maurer K.H."/>
            <person name="Ehrenreich P."/>
            <person name="Baeumer S."/>
            <person name="Henne A."/>
            <person name="Liesegang H."/>
            <person name="Merkl R."/>
            <person name="Ehrenreich A."/>
            <person name="Gottschalk G."/>
        </authorList>
    </citation>
    <scope>NUCLEOTIDE SEQUENCE [LARGE SCALE GENOMIC DNA]</scope>
    <source>
        <strain>ATCC 14580 / DSM 13 / JCM 2505 / CCUG 7422 / NBRC 12200 / NCIMB 9375 / NCTC 10341 / NRRL NRS-1264 / Gibson 46</strain>
    </source>
</reference>
<reference key="2">
    <citation type="journal article" date="2004" name="Genome Biol.">
        <title>Complete genome sequence of the industrial bacterium Bacillus licheniformis and comparisons with closely related Bacillus species.</title>
        <authorList>
            <person name="Rey M.W."/>
            <person name="Ramaiya P."/>
            <person name="Nelson B.A."/>
            <person name="Brody-Karpin S.D."/>
            <person name="Zaretsky E.J."/>
            <person name="Tang M."/>
            <person name="Lopez de Leon A."/>
            <person name="Xiang H."/>
            <person name="Gusti V."/>
            <person name="Clausen I.G."/>
            <person name="Olsen P.B."/>
            <person name="Rasmussen M.D."/>
            <person name="Andersen J.T."/>
            <person name="Joergensen P.L."/>
            <person name="Larsen T.S."/>
            <person name="Sorokin A."/>
            <person name="Bolotin A."/>
            <person name="Lapidus A."/>
            <person name="Galleron N."/>
            <person name="Ehrlich S.D."/>
            <person name="Berka R.M."/>
        </authorList>
    </citation>
    <scope>NUCLEOTIDE SEQUENCE [LARGE SCALE GENOMIC DNA]</scope>
    <source>
        <strain>ATCC 14580 / DSM 13 / JCM 2505 / CCUG 7422 / NBRC 12200 / NCIMB 9375 / NCTC 10341 / NRRL NRS-1264 / Gibson 46</strain>
    </source>
</reference>
<organism>
    <name type="scientific">Bacillus licheniformis (strain ATCC 14580 / DSM 13 / JCM 2505 / CCUG 7422 / NBRC 12200 / NCIMB 9375 / NCTC 10341 / NRRL NRS-1264 / Gibson 46)</name>
    <dbReference type="NCBI Taxonomy" id="279010"/>
    <lineage>
        <taxon>Bacteria</taxon>
        <taxon>Bacillati</taxon>
        <taxon>Bacillota</taxon>
        <taxon>Bacilli</taxon>
        <taxon>Bacillales</taxon>
        <taxon>Bacillaceae</taxon>
        <taxon>Bacillus</taxon>
    </lineage>
</organism>
<feature type="chain" id="PRO_0000311367" description="Spore germination protein GerT">
    <location>
        <begin position="1"/>
        <end position="150"/>
    </location>
</feature>
<dbReference type="EMBL" id="CP000002">
    <property type="protein sequence ID" value="AAU23793.1"/>
    <property type="molecule type" value="Genomic_DNA"/>
</dbReference>
<dbReference type="EMBL" id="AE017333">
    <property type="protein sequence ID" value="AAU41150.1"/>
    <property type="molecule type" value="Genomic_DNA"/>
</dbReference>
<dbReference type="RefSeq" id="WP_003182718.1">
    <property type="nucleotide sequence ID" value="NC_006322.1"/>
</dbReference>
<dbReference type="SMR" id="Q65IG4"/>
<dbReference type="STRING" id="279010.BL01464"/>
<dbReference type="KEGG" id="bld:BLi02270"/>
<dbReference type="KEGG" id="bli:BL01464"/>
<dbReference type="eggNOG" id="ENOG50339SJ">
    <property type="taxonomic scope" value="Bacteria"/>
</dbReference>
<dbReference type="HOGENOM" id="CLU_136041_0_0_9"/>
<dbReference type="Proteomes" id="UP000000606">
    <property type="component" value="Chromosome"/>
</dbReference>
<dbReference type="Bgee" id="BL01464">
    <property type="expression patterns" value="Expressed in testis and 1 other cell type or tissue"/>
</dbReference>
<dbReference type="CDD" id="cd06464">
    <property type="entry name" value="ACD_sHsps-like"/>
    <property type="match status" value="1"/>
</dbReference>
<dbReference type="Gene3D" id="2.60.40.790">
    <property type="match status" value="1"/>
</dbReference>
<dbReference type="InterPro" id="IPR008978">
    <property type="entry name" value="HSP20-like_chaperone"/>
</dbReference>
<dbReference type="SUPFAM" id="SSF49764">
    <property type="entry name" value="HSP20-like chaperones"/>
    <property type="match status" value="1"/>
</dbReference>
<proteinExistence type="inferred from homology"/>
<accession>Q65IG4</accession>
<accession>Q62TW6</accession>
<name>GERT_BACLD</name>
<gene>
    <name type="primary">gerT</name>
    <name type="synonym">yozR</name>
    <name type="ordered locus">BLi02270</name>
    <name type="ordered locus">BL01464</name>
</gene>
<comment type="function">
    <text evidence="1">Involved in spore germination.</text>
</comment>
<comment type="subcellular location">
    <subcellularLocation>
        <location evidence="1">Spore coat</location>
    </subcellularLocation>
</comment>
<sequence>MFDWQRFFPFQQFSKDGLKNADPKDVEQYIHHMMKSVFGPGYAVQFPFRDPLSKETSAADESDPIDIFETTSHVFVKIPLTKEQLNLLKIKHTSQTLIIENYPEKGRQEKVVLPSLVRRKGTKAIFKDGILEVMFLKNEDFNLSEIDITF</sequence>
<keyword id="KW-0309">Germination</keyword>
<keyword id="KW-1185">Reference proteome</keyword>
<protein>
    <recommendedName>
        <fullName>Spore germination protein GerT</fullName>
    </recommendedName>
</protein>
<evidence type="ECO:0000250" key="1"/>